<protein>
    <recommendedName>
        <fullName>Defensin-like protein 218</fullName>
    </recommendedName>
</protein>
<reference key="1">
    <citation type="journal article" date="2000" name="Nature">
        <title>Sequence and analysis of chromosome 5 of the plant Arabidopsis thaliana.</title>
        <authorList>
            <person name="Tabata S."/>
            <person name="Kaneko T."/>
            <person name="Nakamura Y."/>
            <person name="Kotani H."/>
            <person name="Kato T."/>
            <person name="Asamizu E."/>
            <person name="Miyajima N."/>
            <person name="Sasamoto S."/>
            <person name="Kimura T."/>
            <person name="Hosouchi T."/>
            <person name="Kawashima K."/>
            <person name="Kohara M."/>
            <person name="Matsumoto M."/>
            <person name="Matsuno A."/>
            <person name="Muraki A."/>
            <person name="Nakayama S."/>
            <person name="Nakazaki N."/>
            <person name="Naruo K."/>
            <person name="Okumura S."/>
            <person name="Shinpo S."/>
            <person name="Takeuchi C."/>
            <person name="Wada T."/>
            <person name="Watanabe A."/>
            <person name="Yamada M."/>
            <person name="Yasuda M."/>
            <person name="Sato S."/>
            <person name="de la Bastide M."/>
            <person name="Huang E."/>
            <person name="Spiegel L."/>
            <person name="Gnoj L."/>
            <person name="O'Shaughnessy A."/>
            <person name="Preston R."/>
            <person name="Habermann K."/>
            <person name="Murray J."/>
            <person name="Johnson D."/>
            <person name="Rohlfing T."/>
            <person name="Nelson J."/>
            <person name="Stoneking T."/>
            <person name="Pepin K."/>
            <person name="Spieth J."/>
            <person name="Sekhon M."/>
            <person name="Armstrong J."/>
            <person name="Becker M."/>
            <person name="Belter E."/>
            <person name="Cordum H."/>
            <person name="Cordes M."/>
            <person name="Courtney L."/>
            <person name="Courtney W."/>
            <person name="Dante M."/>
            <person name="Du H."/>
            <person name="Edwards J."/>
            <person name="Fryman J."/>
            <person name="Haakensen B."/>
            <person name="Lamar E."/>
            <person name="Latreille P."/>
            <person name="Leonard S."/>
            <person name="Meyer R."/>
            <person name="Mulvaney E."/>
            <person name="Ozersky P."/>
            <person name="Riley A."/>
            <person name="Strowmatt C."/>
            <person name="Wagner-McPherson C."/>
            <person name="Wollam A."/>
            <person name="Yoakum M."/>
            <person name="Bell M."/>
            <person name="Dedhia N."/>
            <person name="Parnell L."/>
            <person name="Shah R."/>
            <person name="Rodriguez M."/>
            <person name="Hoon See L."/>
            <person name="Vil D."/>
            <person name="Baker J."/>
            <person name="Kirchoff K."/>
            <person name="Toth K."/>
            <person name="King L."/>
            <person name="Bahret A."/>
            <person name="Miller B."/>
            <person name="Marra M.A."/>
            <person name="Martienssen R."/>
            <person name="McCombie W.R."/>
            <person name="Wilson R.K."/>
            <person name="Murphy G."/>
            <person name="Bancroft I."/>
            <person name="Volckaert G."/>
            <person name="Wambutt R."/>
            <person name="Duesterhoeft A."/>
            <person name="Stiekema W."/>
            <person name="Pohl T."/>
            <person name="Entian K.-D."/>
            <person name="Terryn N."/>
            <person name="Hartley N."/>
            <person name="Bent E."/>
            <person name="Johnson S."/>
            <person name="Langham S.-A."/>
            <person name="McCullagh B."/>
            <person name="Robben J."/>
            <person name="Grymonprez B."/>
            <person name="Zimmermann W."/>
            <person name="Ramsperger U."/>
            <person name="Wedler H."/>
            <person name="Balke K."/>
            <person name="Wedler E."/>
            <person name="Peters S."/>
            <person name="van Staveren M."/>
            <person name="Dirkse W."/>
            <person name="Mooijman P."/>
            <person name="Klein Lankhorst R."/>
            <person name="Weitzenegger T."/>
            <person name="Bothe G."/>
            <person name="Rose M."/>
            <person name="Hauf J."/>
            <person name="Berneiser S."/>
            <person name="Hempel S."/>
            <person name="Feldpausch M."/>
            <person name="Lamberth S."/>
            <person name="Villarroel R."/>
            <person name="Gielen J."/>
            <person name="Ardiles W."/>
            <person name="Bents O."/>
            <person name="Lemcke K."/>
            <person name="Kolesov G."/>
            <person name="Mayer K.F.X."/>
            <person name="Rudd S."/>
            <person name="Schoof H."/>
            <person name="Schueller C."/>
            <person name="Zaccaria P."/>
            <person name="Mewes H.-W."/>
            <person name="Bevan M."/>
            <person name="Fransz P.F."/>
        </authorList>
    </citation>
    <scope>NUCLEOTIDE SEQUENCE [LARGE SCALE GENOMIC DNA]</scope>
    <source>
        <strain>cv. Columbia</strain>
    </source>
</reference>
<reference key="2">
    <citation type="journal article" date="2017" name="Plant J.">
        <title>Araport11: a complete reannotation of the Arabidopsis thaliana reference genome.</title>
        <authorList>
            <person name="Cheng C.Y."/>
            <person name="Krishnakumar V."/>
            <person name="Chan A.P."/>
            <person name="Thibaud-Nissen F."/>
            <person name="Schobel S."/>
            <person name="Town C.D."/>
        </authorList>
    </citation>
    <scope>GENOME REANNOTATION</scope>
    <source>
        <strain>cv. Columbia</strain>
    </source>
</reference>
<reference key="3">
    <citation type="journal article" date="2005" name="Plant Physiol.">
        <title>Genome organization of more than 300 defensin-like genes in Arabidopsis.</title>
        <authorList>
            <person name="Silverstein K.A.T."/>
            <person name="Graham M.A."/>
            <person name="Paape T.D."/>
            <person name="VandenBosch K.A."/>
        </authorList>
    </citation>
    <scope>GENE FAMILY</scope>
</reference>
<evidence type="ECO:0000250" key="1"/>
<evidence type="ECO:0000255" key="2"/>
<evidence type="ECO:0000305" key="3"/>
<name>DF218_ARATH</name>
<sequence>MKTIVCFLTILILVSSCESKNKKVVIIPGPKGERPDIKVVEGPSTVEDDFCYDCVRRCMVKGVGFYFRSCKGFVCRCYYPFMGGYGP</sequence>
<feature type="signal peptide" evidence="2">
    <location>
        <begin position="1"/>
        <end position="19"/>
    </location>
</feature>
<feature type="chain" id="PRO_0000379710" description="Defensin-like protein 218">
    <location>
        <begin position="20"/>
        <end position="87"/>
    </location>
</feature>
<feature type="disulfide bond" evidence="1">
    <location>
        <begin position="51"/>
        <end position="70"/>
    </location>
</feature>
<feature type="disulfide bond" evidence="1">
    <location>
        <begin position="54"/>
        <end position="75"/>
    </location>
</feature>
<feature type="disulfide bond" evidence="1">
    <location>
        <begin position="58"/>
        <end position="77"/>
    </location>
</feature>
<dbReference type="EMBL" id="AC051626">
    <property type="status" value="NOT_ANNOTATED_CDS"/>
    <property type="molecule type" value="Genomic_DNA"/>
</dbReference>
<dbReference type="EMBL" id="CP002688">
    <property type="protein sequence ID" value="AED92553.1"/>
    <property type="molecule type" value="Genomic_DNA"/>
</dbReference>
<dbReference type="RefSeq" id="NP_001031896.1">
    <property type="nucleotide sequence ID" value="NM_001036819.2"/>
</dbReference>
<dbReference type="SMR" id="Q2V370"/>
<dbReference type="STRING" id="3702.Q2V370"/>
<dbReference type="PaxDb" id="3702-AT5G18403.1"/>
<dbReference type="ProteomicsDB" id="224230"/>
<dbReference type="EnsemblPlants" id="AT5G18403.1">
    <property type="protein sequence ID" value="AT5G18403.1"/>
    <property type="gene ID" value="AT5G18403"/>
</dbReference>
<dbReference type="GeneID" id="3770706"/>
<dbReference type="Gramene" id="AT5G18403.1">
    <property type="protein sequence ID" value="AT5G18403.1"/>
    <property type="gene ID" value="AT5G18403"/>
</dbReference>
<dbReference type="KEGG" id="ath:AT5G18403"/>
<dbReference type="Araport" id="AT5G18403"/>
<dbReference type="TAIR" id="AT5G18403"/>
<dbReference type="HOGENOM" id="CLU_190951_0_0_1"/>
<dbReference type="InParanoid" id="Q2V370"/>
<dbReference type="OMA" id="CYDCVRR"/>
<dbReference type="OrthoDB" id="10276187at2759"/>
<dbReference type="PhylomeDB" id="Q2V370"/>
<dbReference type="PRO" id="PR:Q2V370"/>
<dbReference type="Proteomes" id="UP000006548">
    <property type="component" value="Chromosome 5"/>
</dbReference>
<dbReference type="ExpressionAtlas" id="Q2V370">
    <property type="expression patterns" value="baseline and differential"/>
</dbReference>
<dbReference type="GO" id="GO:0005576">
    <property type="term" value="C:extracellular region"/>
    <property type="evidence" value="ECO:0007669"/>
    <property type="project" value="UniProtKB-SubCell"/>
</dbReference>
<dbReference type="GO" id="GO:0050832">
    <property type="term" value="P:defense response to fungus"/>
    <property type="evidence" value="ECO:0007669"/>
    <property type="project" value="UniProtKB-KW"/>
</dbReference>
<dbReference type="GO" id="GO:0031640">
    <property type="term" value="P:killing of cells of another organism"/>
    <property type="evidence" value="ECO:0007669"/>
    <property type="project" value="UniProtKB-KW"/>
</dbReference>
<accession>Q2V370</accession>
<keyword id="KW-0929">Antimicrobial</keyword>
<keyword id="KW-1015">Disulfide bond</keyword>
<keyword id="KW-0295">Fungicide</keyword>
<keyword id="KW-0611">Plant defense</keyword>
<keyword id="KW-1185">Reference proteome</keyword>
<keyword id="KW-0964">Secreted</keyword>
<keyword id="KW-0732">Signal</keyword>
<gene>
    <name type="ordered locus">At5g18403</name>
    <name type="ORF">F20L16</name>
</gene>
<comment type="subcellular location">
    <subcellularLocation>
        <location evidence="1">Secreted</location>
    </subcellularLocation>
</comment>
<comment type="similarity">
    <text evidence="3">Belongs to the DEFL family.</text>
</comment>
<comment type="caution">
    <text evidence="3">Lacks 1 of the 4 disulfide bonds, which are conserved features of the family.</text>
</comment>
<organism>
    <name type="scientific">Arabidopsis thaliana</name>
    <name type="common">Mouse-ear cress</name>
    <dbReference type="NCBI Taxonomy" id="3702"/>
    <lineage>
        <taxon>Eukaryota</taxon>
        <taxon>Viridiplantae</taxon>
        <taxon>Streptophyta</taxon>
        <taxon>Embryophyta</taxon>
        <taxon>Tracheophyta</taxon>
        <taxon>Spermatophyta</taxon>
        <taxon>Magnoliopsida</taxon>
        <taxon>eudicotyledons</taxon>
        <taxon>Gunneridae</taxon>
        <taxon>Pentapetalae</taxon>
        <taxon>rosids</taxon>
        <taxon>malvids</taxon>
        <taxon>Brassicales</taxon>
        <taxon>Brassicaceae</taxon>
        <taxon>Camelineae</taxon>
        <taxon>Arabidopsis</taxon>
    </lineage>
</organism>
<proteinExistence type="evidence at transcript level"/>